<protein>
    <recommendedName>
        <fullName evidence="1">Ribonuclease P protein component</fullName>
        <shortName evidence="1">RNase P protein</shortName>
        <shortName evidence="1">RNaseP protein</shortName>
        <ecNumber evidence="1">3.1.26.5</ecNumber>
    </recommendedName>
    <alternativeName>
        <fullName evidence="1">Protein C5</fullName>
    </alternativeName>
</protein>
<proteinExistence type="evidence at protein level"/>
<accession>P0A0H5</accession>
<accession>P58031</accession>
<accession>Q9LAH9</accession>
<organism>
    <name type="scientific">Staphylococcus aureus</name>
    <dbReference type="NCBI Taxonomy" id="1280"/>
    <lineage>
        <taxon>Bacteria</taxon>
        <taxon>Bacillati</taxon>
        <taxon>Bacillota</taxon>
        <taxon>Bacilli</taxon>
        <taxon>Bacillales</taxon>
        <taxon>Staphylococcaceae</taxon>
        <taxon>Staphylococcus</taxon>
    </lineage>
</organism>
<evidence type="ECO:0000255" key="1">
    <source>
        <dbReference type="HAMAP-Rule" id="MF_00227"/>
    </source>
</evidence>
<evidence type="ECO:0007829" key="2">
    <source>
        <dbReference type="PDB" id="1D6T"/>
    </source>
</evidence>
<evidence type="ECO:0007829" key="3">
    <source>
        <dbReference type="PDB" id="6OV1"/>
    </source>
</evidence>
<name>RNPA_STAAU</name>
<keyword id="KW-0002">3D-structure</keyword>
<keyword id="KW-0255">Endonuclease</keyword>
<keyword id="KW-0378">Hydrolase</keyword>
<keyword id="KW-0540">Nuclease</keyword>
<keyword id="KW-0694">RNA-binding</keyword>
<keyword id="KW-0819">tRNA processing</keyword>
<sequence>MLLEKAYRIKKNADFQRIYKKGHSVANRQFVVYTCNNKEIDHFRLGISVSKKLGNAVLRNKIKRAIRENFKVHKSHILAKDIIVIARQPAKDMTTLQIQNSLEHVLKIAKVFNKKIK</sequence>
<gene>
    <name evidence="1" type="primary">rnpA</name>
</gene>
<feature type="chain" id="PRO_0000198530" description="Ribonuclease P protein component">
    <location>
        <begin position="1"/>
        <end position="117"/>
    </location>
</feature>
<feature type="helix" evidence="2">
    <location>
        <begin position="5"/>
        <end position="7"/>
    </location>
</feature>
<feature type="helix" evidence="3">
    <location>
        <begin position="12"/>
        <end position="21"/>
    </location>
</feature>
<feature type="strand" evidence="3">
    <location>
        <begin position="22"/>
        <end position="26"/>
    </location>
</feature>
<feature type="strand" evidence="3">
    <location>
        <begin position="28"/>
        <end position="35"/>
    </location>
</feature>
<feature type="strand" evidence="3">
    <location>
        <begin position="44"/>
        <end position="49"/>
    </location>
</feature>
<feature type="helix" evidence="3">
    <location>
        <begin position="51"/>
        <end position="53"/>
    </location>
</feature>
<feature type="helix" evidence="3">
    <location>
        <begin position="56"/>
        <end position="73"/>
    </location>
</feature>
<feature type="helix" evidence="3">
    <location>
        <begin position="74"/>
        <end position="76"/>
    </location>
</feature>
<feature type="strand" evidence="3">
    <location>
        <begin position="81"/>
        <end position="86"/>
    </location>
</feature>
<feature type="helix" evidence="3">
    <location>
        <begin position="88"/>
        <end position="92"/>
    </location>
</feature>
<feature type="helix" evidence="3">
    <location>
        <begin position="95"/>
        <end position="108"/>
    </location>
</feature>
<feature type="strand" evidence="2">
    <location>
        <begin position="112"/>
        <end position="114"/>
    </location>
</feature>
<reference key="1">
    <citation type="submission" date="1999-03" db="EMBL/GenBank/DDBJ databases">
        <title>Cloning and characterization of Staphylococcus aureus ribonuclease P.</title>
        <authorList>
            <person name="Poppe S.M."/>
            <person name="Swaney S.M."/>
            <person name="Choi G.H."/>
            <person name="Hromockyj A."/>
            <person name="Shinabarger D.L."/>
        </authorList>
    </citation>
    <scope>NUCLEOTIDE SEQUENCE [GENOMIC DNA]</scope>
    <source>
        <strain>ISP3</strain>
    </source>
</reference>
<reference key="2">
    <citation type="journal article" date="2000" name="J. Mol. Biol.">
        <title>The structure of ribonuclease P protein from Staphylococcus aureus reveals a unique binding site for single-stranded RNA.</title>
        <authorList>
            <person name="Spitzfaden C."/>
            <person name="Nicholson N."/>
            <person name="Jones J.J."/>
            <person name="Guth S."/>
            <person name="Lehr R."/>
            <person name="Prescott C.D."/>
            <person name="Hegg L.A."/>
            <person name="Eggleston D.S."/>
        </authorList>
    </citation>
    <scope>STRUCTURE BY NMR</scope>
</reference>
<comment type="function">
    <text>RNaseP catalyzes the removal of the 5'-leader sequence from pre-tRNA to produce the mature 5'-terminus. It can also cleave other RNA substrates such as 4.5S RNA. The protein component plays an auxiliary but essential role in vivo by binding to the 5'-leader sequence and broadening the substrate specificity of the ribozyme.</text>
</comment>
<comment type="catalytic activity">
    <reaction evidence="1">
        <text>Endonucleolytic cleavage of RNA, removing 5'-extranucleotides from tRNA precursor.</text>
        <dbReference type="EC" id="3.1.26.5"/>
    </reaction>
</comment>
<comment type="subunit">
    <text>Consists of a catalytic RNA component (M1 or rnpB) and a protein subunit.</text>
</comment>
<comment type="similarity">
    <text evidence="1">Belongs to the RnpA family.</text>
</comment>
<dbReference type="EC" id="3.1.26.5" evidence="1"/>
<dbReference type="EMBL" id="AF135268">
    <property type="protein sequence ID" value="AAF61418.1"/>
    <property type="molecule type" value="Genomic_DNA"/>
</dbReference>
<dbReference type="RefSeq" id="WP_001789343.1">
    <property type="nucleotide sequence ID" value="NZ_WYDB01000001.1"/>
</dbReference>
<dbReference type="PDB" id="1D6T">
    <property type="method" value="NMR"/>
    <property type="chains" value="A=1-117"/>
</dbReference>
<dbReference type="PDB" id="6D1R">
    <property type="method" value="X-ray"/>
    <property type="resolution" value="2.00 A"/>
    <property type="chains" value="A=4-117"/>
</dbReference>
<dbReference type="PDB" id="6OV1">
    <property type="method" value="X-ray"/>
    <property type="resolution" value="1.66 A"/>
    <property type="chains" value="A/B=4-117"/>
</dbReference>
<dbReference type="PDBsum" id="1D6T"/>
<dbReference type="PDBsum" id="6D1R"/>
<dbReference type="PDBsum" id="6OV1"/>
<dbReference type="SMR" id="P0A0H5"/>
<dbReference type="BindingDB" id="P0A0H5"/>
<dbReference type="ChEMBL" id="CHEMBL4295710"/>
<dbReference type="OMA" id="PEQKHFR"/>
<dbReference type="EvolutionaryTrace" id="P0A0H5"/>
<dbReference type="GO" id="GO:0030677">
    <property type="term" value="C:ribonuclease P complex"/>
    <property type="evidence" value="ECO:0007669"/>
    <property type="project" value="TreeGrafter"/>
</dbReference>
<dbReference type="GO" id="GO:0042781">
    <property type="term" value="F:3'-tRNA processing endoribonuclease activity"/>
    <property type="evidence" value="ECO:0007669"/>
    <property type="project" value="TreeGrafter"/>
</dbReference>
<dbReference type="GO" id="GO:0004526">
    <property type="term" value="F:ribonuclease P activity"/>
    <property type="evidence" value="ECO:0007669"/>
    <property type="project" value="UniProtKB-UniRule"/>
</dbReference>
<dbReference type="GO" id="GO:0000049">
    <property type="term" value="F:tRNA binding"/>
    <property type="evidence" value="ECO:0007669"/>
    <property type="project" value="UniProtKB-UniRule"/>
</dbReference>
<dbReference type="GO" id="GO:0001682">
    <property type="term" value="P:tRNA 5'-leader removal"/>
    <property type="evidence" value="ECO:0007669"/>
    <property type="project" value="UniProtKB-UniRule"/>
</dbReference>
<dbReference type="FunFam" id="3.30.230.10:FF:000021">
    <property type="entry name" value="Ribonuclease P protein component"/>
    <property type="match status" value="1"/>
</dbReference>
<dbReference type="Gene3D" id="3.30.230.10">
    <property type="match status" value="1"/>
</dbReference>
<dbReference type="HAMAP" id="MF_00227">
    <property type="entry name" value="RNase_P"/>
    <property type="match status" value="1"/>
</dbReference>
<dbReference type="InterPro" id="IPR020568">
    <property type="entry name" value="Ribosomal_Su5_D2-typ_SF"/>
</dbReference>
<dbReference type="InterPro" id="IPR014721">
    <property type="entry name" value="Ribsml_uS5_D2-typ_fold_subgr"/>
</dbReference>
<dbReference type="InterPro" id="IPR000100">
    <property type="entry name" value="RNase_P"/>
</dbReference>
<dbReference type="InterPro" id="IPR020539">
    <property type="entry name" value="RNase_P_CS"/>
</dbReference>
<dbReference type="NCBIfam" id="TIGR00188">
    <property type="entry name" value="rnpA"/>
    <property type="match status" value="1"/>
</dbReference>
<dbReference type="PANTHER" id="PTHR33992">
    <property type="entry name" value="RIBONUCLEASE P PROTEIN COMPONENT"/>
    <property type="match status" value="1"/>
</dbReference>
<dbReference type="PANTHER" id="PTHR33992:SF1">
    <property type="entry name" value="RIBONUCLEASE P PROTEIN COMPONENT"/>
    <property type="match status" value="1"/>
</dbReference>
<dbReference type="Pfam" id="PF00825">
    <property type="entry name" value="Ribonuclease_P"/>
    <property type="match status" value="1"/>
</dbReference>
<dbReference type="SUPFAM" id="SSF54211">
    <property type="entry name" value="Ribosomal protein S5 domain 2-like"/>
    <property type="match status" value="1"/>
</dbReference>
<dbReference type="PROSITE" id="PS00648">
    <property type="entry name" value="RIBONUCLEASE_P"/>
    <property type="match status" value="1"/>
</dbReference>